<comment type="function">
    <text evidence="1">Catalyzes the S-adenosylmethionine monomethyl esterification of trans-aconitate.</text>
</comment>
<comment type="catalytic activity">
    <reaction evidence="1">
        <text>trans-aconitate + S-adenosyl-L-methionine = (E)-3-(methoxycarbonyl)pent-2-enedioate + S-adenosyl-L-homocysteine</text>
        <dbReference type="Rhea" id="RHEA:14969"/>
        <dbReference type="ChEBI" id="CHEBI:15708"/>
        <dbReference type="ChEBI" id="CHEBI:57470"/>
        <dbReference type="ChEBI" id="CHEBI:57856"/>
        <dbReference type="ChEBI" id="CHEBI:59789"/>
        <dbReference type="EC" id="2.1.1.144"/>
    </reaction>
</comment>
<comment type="subcellular location">
    <subcellularLocation>
        <location evidence="1">Cytoplasm</location>
    </subcellularLocation>
</comment>
<comment type="similarity">
    <text evidence="1">Belongs to the methyltransferase superfamily. Tam family.</text>
</comment>
<dbReference type="EC" id="2.1.1.144" evidence="1"/>
<dbReference type="EMBL" id="CU928145">
    <property type="protein sequence ID" value="CAU97505.1"/>
    <property type="molecule type" value="Genomic_DNA"/>
</dbReference>
<dbReference type="RefSeq" id="WP_001286556.1">
    <property type="nucleotide sequence ID" value="NC_011748.1"/>
</dbReference>
<dbReference type="SMR" id="B7L7L9"/>
<dbReference type="KEGG" id="eck:EC55989_1652"/>
<dbReference type="HOGENOM" id="CLU_037990_5_2_6"/>
<dbReference type="Proteomes" id="UP000000746">
    <property type="component" value="Chromosome"/>
</dbReference>
<dbReference type="GO" id="GO:0005737">
    <property type="term" value="C:cytoplasm"/>
    <property type="evidence" value="ECO:0007669"/>
    <property type="project" value="UniProtKB-SubCell"/>
</dbReference>
<dbReference type="GO" id="GO:0030798">
    <property type="term" value="F:trans-aconitate 2-methyltransferase activity"/>
    <property type="evidence" value="ECO:0007669"/>
    <property type="project" value="UniProtKB-UniRule"/>
</dbReference>
<dbReference type="GO" id="GO:0032259">
    <property type="term" value="P:methylation"/>
    <property type="evidence" value="ECO:0007669"/>
    <property type="project" value="UniProtKB-KW"/>
</dbReference>
<dbReference type="CDD" id="cd02440">
    <property type="entry name" value="AdoMet_MTases"/>
    <property type="match status" value="1"/>
</dbReference>
<dbReference type="Gene3D" id="1.10.150.290">
    <property type="entry name" value="S-adenosyl-L-methionine-dependent methyltransferases"/>
    <property type="match status" value="1"/>
</dbReference>
<dbReference type="Gene3D" id="3.40.50.150">
    <property type="entry name" value="Vaccinia Virus protein VP39"/>
    <property type="match status" value="1"/>
</dbReference>
<dbReference type="HAMAP" id="MF_00560">
    <property type="entry name" value="Tran_acon_Me_trans"/>
    <property type="match status" value="1"/>
</dbReference>
<dbReference type="InterPro" id="IPR041698">
    <property type="entry name" value="Methyltransf_25"/>
</dbReference>
<dbReference type="InterPro" id="IPR029063">
    <property type="entry name" value="SAM-dependent_MTases_sf"/>
</dbReference>
<dbReference type="InterPro" id="IPR023506">
    <property type="entry name" value="Trans-aconitate_MeTrfase"/>
</dbReference>
<dbReference type="InterPro" id="IPR023149">
    <property type="entry name" value="Trans_acon_MeTrfase_C"/>
</dbReference>
<dbReference type="NCBIfam" id="NF002463">
    <property type="entry name" value="PRK01683.1"/>
    <property type="match status" value="1"/>
</dbReference>
<dbReference type="PANTHER" id="PTHR43861:SF1">
    <property type="entry name" value="TRANS-ACONITATE 2-METHYLTRANSFERASE"/>
    <property type="match status" value="1"/>
</dbReference>
<dbReference type="PANTHER" id="PTHR43861">
    <property type="entry name" value="TRANS-ACONITATE 2-METHYLTRANSFERASE-RELATED"/>
    <property type="match status" value="1"/>
</dbReference>
<dbReference type="Pfam" id="PF13649">
    <property type="entry name" value="Methyltransf_25"/>
    <property type="match status" value="1"/>
</dbReference>
<dbReference type="SUPFAM" id="SSF53335">
    <property type="entry name" value="S-adenosyl-L-methionine-dependent methyltransferases"/>
    <property type="match status" value="1"/>
</dbReference>
<accession>B7L7L9</accession>
<feature type="chain" id="PRO_1000196654" description="Trans-aconitate 2-methyltransferase">
    <location>
        <begin position="1"/>
        <end position="252"/>
    </location>
</feature>
<keyword id="KW-0963">Cytoplasm</keyword>
<keyword id="KW-0489">Methyltransferase</keyword>
<keyword id="KW-1185">Reference proteome</keyword>
<keyword id="KW-0949">S-adenosyl-L-methionine</keyword>
<keyword id="KW-0808">Transferase</keyword>
<name>TAM_ECO55</name>
<organism>
    <name type="scientific">Escherichia coli (strain 55989 / EAEC)</name>
    <dbReference type="NCBI Taxonomy" id="585055"/>
    <lineage>
        <taxon>Bacteria</taxon>
        <taxon>Pseudomonadati</taxon>
        <taxon>Pseudomonadota</taxon>
        <taxon>Gammaproteobacteria</taxon>
        <taxon>Enterobacterales</taxon>
        <taxon>Enterobacteriaceae</taxon>
        <taxon>Escherichia</taxon>
    </lineage>
</organism>
<sequence length="252" mass="28937">MSDWNPSLYLHFAAERSRPAVELLARVPLENIEYVADLGCGPGNSTALLNQRWPAARITGIDSSPAMIAEARSALPDCQFVEADIRNWQPEQALDLIFANASLQWLPDHYELFPHLVSLLNPQGVLAVQMPDNWLEPTHVLMREVAWEQNYPDRGRESLAGIHAYYDILSEAGCEVDIWRTTYYHQMPSHQAIIDWVTATGLRPWLQDLAESEQQLFLTRYHQMLEEQYPLQENGQILLAFPRLFIVARRTE</sequence>
<proteinExistence type="inferred from homology"/>
<evidence type="ECO:0000255" key="1">
    <source>
        <dbReference type="HAMAP-Rule" id="MF_00560"/>
    </source>
</evidence>
<gene>
    <name evidence="1" type="primary">tam</name>
    <name type="ordered locus">EC55989_1652</name>
</gene>
<protein>
    <recommendedName>
        <fullName evidence="1">Trans-aconitate 2-methyltransferase</fullName>
        <ecNumber evidence="1">2.1.1.144</ecNumber>
    </recommendedName>
</protein>
<reference key="1">
    <citation type="journal article" date="2009" name="PLoS Genet.">
        <title>Organised genome dynamics in the Escherichia coli species results in highly diverse adaptive paths.</title>
        <authorList>
            <person name="Touchon M."/>
            <person name="Hoede C."/>
            <person name="Tenaillon O."/>
            <person name="Barbe V."/>
            <person name="Baeriswyl S."/>
            <person name="Bidet P."/>
            <person name="Bingen E."/>
            <person name="Bonacorsi S."/>
            <person name="Bouchier C."/>
            <person name="Bouvet O."/>
            <person name="Calteau A."/>
            <person name="Chiapello H."/>
            <person name="Clermont O."/>
            <person name="Cruveiller S."/>
            <person name="Danchin A."/>
            <person name="Diard M."/>
            <person name="Dossat C."/>
            <person name="Karoui M.E."/>
            <person name="Frapy E."/>
            <person name="Garry L."/>
            <person name="Ghigo J.M."/>
            <person name="Gilles A.M."/>
            <person name="Johnson J."/>
            <person name="Le Bouguenec C."/>
            <person name="Lescat M."/>
            <person name="Mangenot S."/>
            <person name="Martinez-Jehanne V."/>
            <person name="Matic I."/>
            <person name="Nassif X."/>
            <person name="Oztas S."/>
            <person name="Petit M.A."/>
            <person name="Pichon C."/>
            <person name="Rouy Z."/>
            <person name="Ruf C.S."/>
            <person name="Schneider D."/>
            <person name="Tourret J."/>
            <person name="Vacherie B."/>
            <person name="Vallenet D."/>
            <person name="Medigue C."/>
            <person name="Rocha E.P.C."/>
            <person name="Denamur E."/>
        </authorList>
    </citation>
    <scope>NUCLEOTIDE SEQUENCE [LARGE SCALE GENOMIC DNA]</scope>
    <source>
        <strain>55989 / EAEC</strain>
    </source>
</reference>